<dbReference type="EC" id="3.4.21.-"/>
<dbReference type="SABIO-RK" id="P0C578"/>
<dbReference type="GO" id="GO:0005576">
    <property type="term" value="C:extracellular region"/>
    <property type="evidence" value="ECO:0007669"/>
    <property type="project" value="UniProtKB-SubCell"/>
</dbReference>
<dbReference type="GO" id="GO:0008236">
    <property type="term" value="F:serine-type peptidase activity"/>
    <property type="evidence" value="ECO:0007669"/>
    <property type="project" value="UniProtKB-KW"/>
</dbReference>
<dbReference type="GO" id="GO:0090729">
    <property type="term" value="F:toxin activity"/>
    <property type="evidence" value="ECO:0007669"/>
    <property type="project" value="UniProtKB-KW"/>
</dbReference>
<dbReference type="GO" id="GO:0006508">
    <property type="term" value="P:proteolysis"/>
    <property type="evidence" value="ECO:0007669"/>
    <property type="project" value="UniProtKB-KW"/>
</dbReference>
<proteinExistence type="evidence at protein level"/>
<keyword id="KW-1204">Blood coagulation cascade activating toxin</keyword>
<keyword id="KW-0903">Direct protein sequencing</keyword>
<keyword id="KW-0325">Glycoprotein</keyword>
<keyword id="KW-1199">Hemostasis impairing toxin</keyword>
<keyword id="KW-0378">Hydrolase</keyword>
<keyword id="KW-0645">Protease</keyword>
<keyword id="KW-0964">Secreted</keyword>
<keyword id="KW-0720">Serine protease</keyword>
<keyword id="KW-0800">Toxin</keyword>
<protein>
    <recommendedName>
        <fullName>Thrombin-like enzyme okinaxobin-2</fullName>
        <shortName>SVTLE</shortName>
        <ecNumber>3.4.21.-</ecNumber>
    </recommendedName>
    <alternativeName>
        <fullName>Fibrinogen-clotting enzyme</fullName>
    </alternativeName>
    <alternativeName>
        <fullName>Okinaxobin II</fullName>
    </alternativeName>
    <alternativeName>
        <fullName>Snake venom serine protease</fullName>
        <shortName>SVSP</shortName>
    </alternativeName>
</protein>
<sequence length="20" mass="2312">VVGGDECNINEHRFLVALYY</sequence>
<comment type="function">
    <text evidence="2">Thrombin-like snake venom serine protease. Releases both fibrinopeptides A and B from fibrinogen (FGA and FGB) to form fibrin clots.</text>
</comment>
<comment type="activity regulation">
    <text evidence="2">Strongly inactivated by diisopropylfluorophosphate (DFP) and to a lesser extent by tosyl-L-lysine chloromethyl ketone (TLCK).</text>
</comment>
<comment type="biophysicochemical properties">
    <kinetics>
        <KM evidence="2">118 uM for tosyl-L-arginine methyl ester (TAME)</KM>
        <KM evidence="2">67 uM for benzoyl-L-arginine p-nitroanilide (BAPA)</KM>
    </kinetics>
    <phDependence>
        <text evidence="2">Optimum pH is 8.0.</text>
    </phDependence>
</comment>
<comment type="subunit">
    <text evidence="2">Monomer.</text>
</comment>
<comment type="subcellular location">
    <subcellularLocation>
        <location evidence="2">Secreted</location>
    </subcellularLocation>
</comment>
<comment type="tissue specificity">
    <text evidence="2">Expressed by the venom gland.</text>
</comment>
<comment type="PTM">
    <text evidence="2">Glycosylated.</text>
</comment>
<comment type="similarity">
    <text evidence="1">Belongs to the peptidase S1 family. Snake venom subfamily.</text>
</comment>
<accession>P0C578</accession>
<evidence type="ECO:0000255" key="1">
    <source>
        <dbReference type="PROSITE-ProRule" id="PRU00274"/>
    </source>
</evidence>
<evidence type="ECO:0000269" key="2">
    <source>
    </source>
</evidence>
<feature type="chain" id="PRO_0000295002" description="Thrombin-like enzyme okinaxobin-2">
    <location>
        <begin position="1"/>
        <end position="20" status="greater than"/>
    </location>
</feature>
<feature type="domain" description="Peptidase S1" evidence="1">
    <location>
        <begin position="1"/>
        <end position="20" status="greater than"/>
    </location>
</feature>
<feature type="non-terminal residue">
    <location>
        <position position="20"/>
    </location>
</feature>
<reference key="1">
    <citation type="journal article" date="1994" name="Toxicon">
        <title>Purification and characterization of a coagulant enzyme, okinaxobin II, from Trimeresurus okinavensis (himehabu snake) venom which release fibrinopeptides A and B.</title>
        <authorList>
            <person name="Nose T."/>
            <person name="Shimohigashi Y."/>
            <person name="Hattori S."/>
            <person name="Kihara H."/>
            <person name="Ohno M."/>
        </authorList>
    </citation>
    <scope>PROTEIN SEQUENCE</scope>
    <scope>FUNCTION</scope>
    <scope>ACTIVITY REGULATION</scope>
    <scope>BIOPHYSICOCHEMICAL PROPERTIES</scope>
    <scope>SUBUNIT</scope>
    <scope>SUBCELLULAR LOCATION</scope>
    <scope>TISSUE SPECIFICITY</scope>
    <scope>GLYCOSYLATION</scope>
    <source>
        <tissue>Venom</tissue>
    </source>
</reference>
<organism>
    <name type="scientific">Ovophis okinavensis</name>
    <name type="common">Ryukyu Island pit viper</name>
    <name type="synonym">Trimeresurus okinavensis</name>
    <dbReference type="NCBI Taxonomy" id="8769"/>
    <lineage>
        <taxon>Eukaryota</taxon>
        <taxon>Metazoa</taxon>
        <taxon>Chordata</taxon>
        <taxon>Craniata</taxon>
        <taxon>Vertebrata</taxon>
        <taxon>Euteleostomi</taxon>
        <taxon>Lepidosauria</taxon>
        <taxon>Squamata</taxon>
        <taxon>Bifurcata</taxon>
        <taxon>Unidentata</taxon>
        <taxon>Episquamata</taxon>
        <taxon>Toxicofera</taxon>
        <taxon>Serpentes</taxon>
        <taxon>Colubroidea</taxon>
        <taxon>Viperidae</taxon>
        <taxon>Crotalinae</taxon>
        <taxon>Ovophis</taxon>
    </lineage>
</organism>
<name>VSP2_OVOOK</name>